<comment type="similarity">
    <text evidence="1">Belongs to the bacterial ribosomal protein bL35 family.</text>
</comment>
<evidence type="ECO:0000255" key="1">
    <source>
        <dbReference type="HAMAP-Rule" id="MF_00514"/>
    </source>
</evidence>
<evidence type="ECO:0000256" key="2">
    <source>
        <dbReference type="SAM" id="MobiDB-lite"/>
    </source>
</evidence>
<evidence type="ECO:0000305" key="3"/>
<name>RL35_LACAC</name>
<feature type="chain" id="PRO_0000258691" description="Large ribosomal subunit protein bL35">
    <location>
        <begin position="1"/>
        <end position="66"/>
    </location>
</feature>
<feature type="region of interest" description="Disordered" evidence="2">
    <location>
        <begin position="1"/>
        <end position="52"/>
    </location>
</feature>
<feature type="compositionally biased region" description="Basic residues" evidence="2">
    <location>
        <begin position="1"/>
        <end position="46"/>
    </location>
</feature>
<reference key="1">
    <citation type="journal article" date="2005" name="Proc. Natl. Acad. Sci. U.S.A.">
        <title>Complete genome sequence of the probiotic lactic acid bacterium Lactobacillus acidophilus NCFM.</title>
        <authorList>
            <person name="Altermann E."/>
            <person name="Russell W.M."/>
            <person name="Azcarate-Peril M.A."/>
            <person name="Barrangou R."/>
            <person name="Buck B.L."/>
            <person name="McAuliffe O."/>
            <person name="Souther N."/>
            <person name="Dobson A."/>
            <person name="Duong T."/>
            <person name="Callanan M."/>
            <person name="Lick S."/>
            <person name="Hamrick A."/>
            <person name="Cano R."/>
            <person name="Klaenhammer T.R."/>
        </authorList>
    </citation>
    <scope>NUCLEOTIDE SEQUENCE [LARGE SCALE GENOMIC DNA]</scope>
    <source>
        <strain>ATCC 700396 / NCK56 / N2 / NCFM</strain>
    </source>
</reference>
<organism>
    <name type="scientific">Lactobacillus acidophilus (strain ATCC 700396 / NCK56 / N2 / NCFM)</name>
    <dbReference type="NCBI Taxonomy" id="272621"/>
    <lineage>
        <taxon>Bacteria</taxon>
        <taxon>Bacillati</taxon>
        <taxon>Bacillota</taxon>
        <taxon>Bacilli</taxon>
        <taxon>Lactobacillales</taxon>
        <taxon>Lactobacillaceae</taxon>
        <taxon>Lactobacillus</taxon>
    </lineage>
</organism>
<proteinExistence type="inferred from homology"/>
<keyword id="KW-1185">Reference proteome</keyword>
<keyword id="KW-0687">Ribonucleoprotein</keyword>
<keyword id="KW-0689">Ribosomal protein</keyword>
<gene>
    <name evidence="1" type="primary">rpmI</name>
    <name type="ordered locus">LBA1537</name>
</gene>
<dbReference type="EMBL" id="CP000033">
    <property type="protein sequence ID" value="AAV43356.1"/>
    <property type="molecule type" value="Genomic_DNA"/>
</dbReference>
<dbReference type="RefSeq" id="WP_003548328.1">
    <property type="nucleotide sequence ID" value="NC_006814.3"/>
</dbReference>
<dbReference type="RefSeq" id="YP_194387.1">
    <property type="nucleotide sequence ID" value="NC_006814.3"/>
</dbReference>
<dbReference type="SMR" id="Q5FIW8"/>
<dbReference type="STRING" id="272621.LBA1537"/>
<dbReference type="GeneID" id="93289395"/>
<dbReference type="KEGG" id="lac:LBA1537"/>
<dbReference type="PATRIC" id="fig|272621.13.peg.1461"/>
<dbReference type="eggNOG" id="COG0291">
    <property type="taxonomic scope" value="Bacteria"/>
</dbReference>
<dbReference type="HOGENOM" id="CLU_169643_3_1_9"/>
<dbReference type="OrthoDB" id="47476at2"/>
<dbReference type="BioCyc" id="LACI272621:G1G49-1504-MONOMER"/>
<dbReference type="Proteomes" id="UP000006381">
    <property type="component" value="Chromosome"/>
</dbReference>
<dbReference type="GO" id="GO:0022625">
    <property type="term" value="C:cytosolic large ribosomal subunit"/>
    <property type="evidence" value="ECO:0007669"/>
    <property type="project" value="TreeGrafter"/>
</dbReference>
<dbReference type="GO" id="GO:0003735">
    <property type="term" value="F:structural constituent of ribosome"/>
    <property type="evidence" value="ECO:0007669"/>
    <property type="project" value="InterPro"/>
</dbReference>
<dbReference type="GO" id="GO:0006412">
    <property type="term" value="P:translation"/>
    <property type="evidence" value="ECO:0007669"/>
    <property type="project" value="UniProtKB-UniRule"/>
</dbReference>
<dbReference type="FunFam" id="4.10.410.60:FF:000001">
    <property type="entry name" value="50S ribosomal protein L35"/>
    <property type="match status" value="1"/>
</dbReference>
<dbReference type="Gene3D" id="4.10.410.60">
    <property type="match status" value="1"/>
</dbReference>
<dbReference type="HAMAP" id="MF_00514">
    <property type="entry name" value="Ribosomal_bL35"/>
    <property type="match status" value="1"/>
</dbReference>
<dbReference type="InterPro" id="IPR001706">
    <property type="entry name" value="Ribosomal_bL35"/>
</dbReference>
<dbReference type="InterPro" id="IPR021137">
    <property type="entry name" value="Ribosomal_bL35-like"/>
</dbReference>
<dbReference type="InterPro" id="IPR018265">
    <property type="entry name" value="Ribosomal_bL35_CS"/>
</dbReference>
<dbReference type="InterPro" id="IPR037229">
    <property type="entry name" value="Ribosomal_bL35_sf"/>
</dbReference>
<dbReference type="NCBIfam" id="TIGR00001">
    <property type="entry name" value="rpmI_bact"/>
    <property type="match status" value="1"/>
</dbReference>
<dbReference type="PANTHER" id="PTHR33343">
    <property type="entry name" value="54S RIBOSOMAL PROTEIN BL35M"/>
    <property type="match status" value="1"/>
</dbReference>
<dbReference type="PANTHER" id="PTHR33343:SF1">
    <property type="entry name" value="LARGE RIBOSOMAL SUBUNIT PROTEIN BL35M"/>
    <property type="match status" value="1"/>
</dbReference>
<dbReference type="Pfam" id="PF01632">
    <property type="entry name" value="Ribosomal_L35p"/>
    <property type="match status" value="1"/>
</dbReference>
<dbReference type="PRINTS" id="PR00064">
    <property type="entry name" value="RIBOSOMALL35"/>
</dbReference>
<dbReference type="SUPFAM" id="SSF143034">
    <property type="entry name" value="L35p-like"/>
    <property type="match status" value="1"/>
</dbReference>
<dbReference type="PROSITE" id="PS00936">
    <property type="entry name" value="RIBOSOMAL_L35"/>
    <property type="match status" value="1"/>
</dbReference>
<sequence>MPKMKTHRASAKRFKRTANGGLKRHHAFTGHRFHGKTKKQRRHLRKPAMVSRSDMKRIKQMVAQMH</sequence>
<accession>Q5FIW8</accession>
<protein>
    <recommendedName>
        <fullName evidence="1">Large ribosomal subunit protein bL35</fullName>
    </recommendedName>
    <alternativeName>
        <fullName evidence="3">50S ribosomal protein L35</fullName>
    </alternativeName>
</protein>